<gene>
    <name evidence="1" type="primary">groEL</name>
    <name evidence="1" type="synonym">groL</name>
    <name type="ordered locus">Swol_1855</name>
</gene>
<name>CH60_SYNWW</name>
<dbReference type="EC" id="5.6.1.7" evidence="1"/>
<dbReference type="EMBL" id="CP000448">
    <property type="protein sequence ID" value="ABI69153.1"/>
    <property type="molecule type" value="Genomic_DNA"/>
</dbReference>
<dbReference type="RefSeq" id="WP_011641248.1">
    <property type="nucleotide sequence ID" value="NC_008346.1"/>
</dbReference>
<dbReference type="SMR" id="Q0AVV1"/>
<dbReference type="STRING" id="335541.Swol_1855"/>
<dbReference type="KEGG" id="swo:Swol_1855"/>
<dbReference type="eggNOG" id="COG0459">
    <property type="taxonomic scope" value="Bacteria"/>
</dbReference>
<dbReference type="HOGENOM" id="CLU_016503_3_0_9"/>
<dbReference type="OrthoDB" id="9766614at2"/>
<dbReference type="Proteomes" id="UP000001968">
    <property type="component" value="Chromosome"/>
</dbReference>
<dbReference type="GO" id="GO:0005737">
    <property type="term" value="C:cytoplasm"/>
    <property type="evidence" value="ECO:0007669"/>
    <property type="project" value="UniProtKB-SubCell"/>
</dbReference>
<dbReference type="GO" id="GO:0005524">
    <property type="term" value="F:ATP binding"/>
    <property type="evidence" value="ECO:0007669"/>
    <property type="project" value="UniProtKB-UniRule"/>
</dbReference>
<dbReference type="GO" id="GO:0140662">
    <property type="term" value="F:ATP-dependent protein folding chaperone"/>
    <property type="evidence" value="ECO:0007669"/>
    <property type="project" value="InterPro"/>
</dbReference>
<dbReference type="GO" id="GO:0016853">
    <property type="term" value="F:isomerase activity"/>
    <property type="evidence" value="ECO:0007669"/>
    <property type="project" value="UniProtKB-KW"/>
</dbReference>
<dbReference type="GO" id="GO:0051082">
    <property type="term" value="F:unfolded protein binding"/>
    <property type="evidence" value="ECO:0007669"/>
    <property type="project" value="UniProtKB-UniRule"/>
</dbReference>
<dbReference type="GO" id="GO:0042026">
    <property type="term" value="P:protein refolding"/>
    <property type="evidence" value="ECO:0007669"/>
    <property type="project" value="UniProtKB-UniRule"/>
</dbReference>
<dbReference type="CDD" id="cd03344">
    <property type="entry name" value="GroEL"/>
    <property type="match status" value="1"/>
</dbReference>
<dbReference type="FunFam" id="3.50.7.10:FF:000001">
    <property type="entry name" value="60 kDa chaperonin"/>
    <property type="match status" value="1"/>
</dbReference>
<dbReference type="Gene3D" id="3.50.7.10">
    <property type="entry name" value="GroEL"/>
    <property type="match status" value="1"/>
</dbReference>
<dbReference type="Gene3D" id="1.10.560.10">
    <property type="entry name" value="GroEL-like equatorial domain"/>
    <property type="match status" value="1"/>
</dbReference>
<dbReference type="Gene3D" id="3.30.260.10">
    <property type="entry name" value="TCP-1-like chaperonin intermediate domain"/>
    <property type="match status" value="1"/>
</dbReference>
<dbReference type="HAMAP" id="MF_00600">
    <property type="entry name" value="CH60"/>
    <property type="match status" value="1"/>
</dbReference>
<dbReference type="InterPro" id="IPR018370">
    <property type="entry name" value="Chaperonin_Cpn60_CS"/>
</dbReference>
<dbReference type="InterPro" id="IPR001844">
    <property type="entry name" value="Cpn60/GroEL"/>
</dbReference>
<dbReference type="InterPro" id="IPR002423">
    <property type="entry name" value="Cpn60/GroEL/TCP-1"/>
</dbReference>
<dbReference type="InterPro" id="IPR027409">
    <property type="entry name" value="GroEL-like_apical_dom_sf"/>
</dbReference>
<dbReference type="InterPro" id="IPR027413">
    <property type="entry name" value="GROEL-like_equatorial_sf"/>
</dbReference>
<dbReference type="InterPro" id="IPR027410">
    <property type="entry name" value="TCP-1-like_intermed_sf"/>
</dbReference>
<dbReference type="NCBIfam" id="TIGR02348">
    <property type="entry name" value="GroEL"/>
    <property type="match status" value="1"/>
</dbReference>
<dbReference type="NCBIfam" id="NF000592">
    <property type="entry name" value="PRK00013.1"/>
    <property type="match status" value="1"/>
</dbReference>
<dbReference type="NCBIfam" id="NF009487">
    <property type="entry name" value="PRK12849.1"/>
    <property type="match status" value="1"/>
</dbReference>
<dbReference type="NCBIfam" id="NF009488">
    <property type="entry name" value="PRK12850.1"/>
    <property type="match status" value="1"/>
</dbReference>
<dbReference type="NCBIfam" id="NF009489">
    <property type="entry name" value="PRK12851.1"/>
    <property type="match status" value="1"/>
</dbReference>
<dbReference type="PANTHER" id="PTHR45633">
    <property type="entry name" value="60 KDA HEAT SHOCK PROTEIN, MITOCHONDRIAL"/>
    <property type="match status" value="1"/>
</dbReference>
<dbReference type="Pfam" id="PF00118">
    <property type="entry name" value="Cpn60_TCP1"/>
    <property type="match status" value="1"/>
</dbReference>
<dbReference type="PRINTS" id="PR00298">
    <property type="entry name" value="CHAPERONIN60"/>
</dbReference>
<dbReference type="SUPFAM" id="SSF52029">
    <property type="entry name" value="GroEL apical domain-like"/>
    <property type="match status" value="1"/>
</dbReference>
<dbReference type="SUPFAM" id="SSF48592">
    <property type="entry name" value="GroEL equatorial domain-like"/>
    <property type="match status" value="1"/>
</dbReference>
<dbReference type="SUPFAM" id="SSF54849">
    <property type="entry name" value="GroEL-intermediate domain like"/>
    <property type="match status" value="1"/>
</dbReference>
<dbReference type="PROSITE" id="PS00296">
    <property type="entry name" value="CHAPERONINS_CPN60"/>
    <property type="match status" value="1"/>
</dbReference>
<evidence type="ECO:0000255" key="1">
    <source>
        <dbReference type="HAMAP-Rule" id="MF_00600"/>
    </source>
</evidence>
<keyword id="KW-0067">ATP-binding</keyword>
<keyword id="KW-0143">Chaperone</keyword>
<keyword id="KW-0963">Cytoplasm</keyword>
<keyword id="KW-0413">Isomerase</keyword>
<keyword id="KW-0547">Nucleotide-binding</keyword>
<keyword id="KW-1185">Reference proteome</keyword>
<comment type="function">
    <text evidence="1">Together with its co-chaperonin GroES, plays an essential role in assisting protein folding. The GroEL-GroES system forms a nano-cage that allows encapsulation of the non-native substrate proteins and provides a physical environment optimized to promote and accelerate protein folding.</text>
</comment>
<comment type="catalytic activity">
    <reaction evidence="1">
        <text>ATP + H2O + a folded polypeptide = ADP + phosphate + an unfolded polypeptide.</text>
        <dbReference type="EC" id="5.6.1.7"/>
    </reaction>
</comment>
<comment type="subunit">
    <text evidence="1">Forms a cylinder of 14 subunits composed of two heptameric rings stacked back-to-back. Interacts with the co-chaperonin GroES.</text>
</comment>
<comment type="subcellular location">
    <subcellularLocation>
        <location evidence="1">Cytoplasm</location>
    </subcellularLocation>
</comment>
<comment type="similarity">
    <text evidence="1">Belongs to the chaperonin (HSP60) family.</text>
</comment>
<reference key="1">
    <citation type="journal article" date="2010" name="Environ. Microbiol.">
        <title>The genome of Syntrophomonas wolfei: new insights into syntrophic metabolism and biohydrogen production.</title>
        <authorList>
            <person name="Sieber J.R."/>
            <person name="Sims D.R."/>
            <person name="Han C."/>
            <person name="Kim E."/>
            <person name="Lykidis A."/>
            <person name="Lapidus A.L."/>
            <person name="McDonnald E."/>
            <person name="Rohlin L."/>
            <person name="Culley D.E."/>
            <person name="Gunsalus R."/>
            <person name="McInerney M.J."/>
        </authorList>
    </citation>
    <scope>NUCLEOTIDE SEQUENCE [LARGE SCALE GENOMIC DNA]</scope>
    <source>
        <strain>DSM 2245B / Goettingen</strain>
    </source>
</reference>
<feature type="chain" id="PRO_0000332096" description="Chaperonin GroEL">
    <location>
        <begin position="1"/>
        <end position="546"/>
    </location>
</feature>
<feature type="binding site" evidence="1">
    <location>
        <begin position="30"/>
        <end position="33"/>
    </location>
    <ligand>
        <name>ATP</name>
        <dbReference type="ChEBI" id="CHEBI:30616"/>
    </ligand>
</feature>
<feature type="binding site" evidence="1">
    <location>
        <begin position="87"/>
        <end position="91"/>
    </location>
    <ligand>
        <name>ATP</name>
        <dbReference type="ChEBI" id="CHEBI:30616"/>
    </ligand>
</feature>
<feature type="binding site" evidence="1">
    <location>
        <position position="414"/>
    </location>
    <ligand>
        <name>ATP</name>
        <dbReference type="ChEBI" id="CHEBI:30616"/>
    </ligand>
</feature>
<feature type="binding site" evidence="1">
    <location>
        <begin position="477"/>
        <end position="479"/>
    </location>
    <ligand>
        <name>ATP</name>
        <dbReference type="ChEBI" id="CHEBI:30616"/>
    </ligand>
</feature>
<feature type="binding site" evidence="1">
    <location>
        <position position="493"/>
    </location>
    <ligand>
        <name>ATP</name>
        <dbReference type="ChEBI" id="CHEBI:30616"/>
    </ligand>
</feature>
<accession>Q0AVV1</accession>
<sequence>MLSKEIKFGEEARRALERGVDTLANAVKVTLGPKGRNVVLDRKFGSPTITNDGVTIARDIDLKDPWENLGCQLVKEVAIKTNDVAGDGTTTATLLAQAMIKEGLKNVAAGANPMIMRRGIDQAVKAVVDEIKTLSKPVESRDSIAQVAAISADDPEIGQLIADAMEKVGRDGVITVEESQSVGTSLEVVEGMNFDRGYISPYMITNTEKMEAVLEDPYILISDKKISSIGEVLPVLEKVVQTGKPMLLIAEEVEGEALATLVVNKLRGTFNCVAVKAPAFGERRKAMLEDIAILTNGQVASEELGVKMENVSLDMLGKARQIVIKKDETIIVDGAGSEQAIRDRSANIKRQLEETESEYDREKLQERLAKLSGGVAVIQVGAATETELKERKHRIEDALAATKAAVEEGIVSGGGVTLINAIKAIEKIEAQGDELTGINLVKKAMEEPLRQIANNAGIEGSVVVEKVKEAETGIGYNALTGVYESMIAAGIIDPAKVTRSAVQNAASISAMVLTTEAVVSELPGEDEMKGMGAGGMGGMGGMGGMM</sequence>
<protein>
    <recommendedName>
        <fullName evidence="1">Chaperonin GroEL</fullName>
        <ecNumber evidence="1">5.6.1.7</ecNumber>
    </recommendedName>
    <alternativeName>
        <fullName evidence="1">60 kDa chaperonin</fullName>
    </alternativeName>
    <alternativeName>
        <fullName evidence="1">Chaperonin-60</fullName>
        <shortName evidence="1">Cpn60</shortName>
    </alternativeName>
</protein>
<proteinExistence type="inferred from homology"/>
<organism>
    <name type="scientific">Syntrophomonas wolfei subsp. wolfei (strain DSM 2245B / Goettingen)</name>
    <dbReference type="NCBI Taxonomy" id="335541"/>
    <lineage>
        <taxon>Bacteria</taxon>
        <taxon>Bacillati</taxon>
        <taxon>Bacillota</taxon>
        <taxon>Clostridia</taxon>
        <taxon>Eubacteriales</taxon>
        <taxon>Syntrophomonadaceae</taxon>
        <taxon>Syntrophomonas</taxon>
    </lineage>
</organism>